<accession>Q2A1G6</accession>
<protein>
    <recommendedName>
        <fullName evidence="1">Ribosome maturation factor RimP</fullName>
    </recommendedName>
</protein>
<name>RIMP_FRATH</name>
<proteinExistence type="inferred from homology"/>
<gene>
    <name evidence="1" type="primary">rimP</name>
    <name type="ordered locus">FTL_1811</name>
</gene>
<comment type="function">
    <text evidence="1">Required for maturation of 30S ribosomal subunits.</text>
</comment>
<comment type="subcellular location">
    <subcellularLocation>
        <location evidence="1">Cytoplasm</location>
    </subcellularLocation>
</comment>
<comment type="similarity">
    <text evidence="1">Belongs to the RimP family.</text>
</comment>
<feature type="chain" id="PRO_1000136763" description="Ribosome maturation factor RimP">
    <location>
        <begin position="1"/>
        <end position="150"/>
    </location>
</feature>
<sequence>MLLDDLYEIVEPITADLGYILWGIEVVGSGKLTIRIFIDHENGVSVDDCQIVSKEISAVFDVEDPVSGKYILEVSSPGMNRQIFNIIQAQALVGFNVKAVTLAPVGSQTKFKGVLERVEGNNVILNLEDGKEISFDFDELKKLRVSPDFS</sequence>
<organism>
    <name type="scientific">Francisella tularensis subsp. holarctica (strain LVS)</name>
    <dbReference type="NCBI Taxonomy" id="376619"/>
    <lineage>
        <taxon>Bacteria</taxon>
        <taxon>Pseudomonadati</taxon>
        <taxon>Pseudomonadota</taxon>
        <taxon>Gammaproteobacteria</taxon>
        <taxon>Thiotrichales</taxon>
        <taxon>Francisellaceae</taxon>
        <taxon>Francisella</taxon>
    </lineage>
</organism>
<reference key="1">
    <citation type="submission" date="2006-03" db="EMBL/GenBank/DDBJ databases">
        <title>Complete genome sequence of Francisella tularensis LVS (Live Vaccine Strain).</title>
        <authorList>
            <person name="Chain P."/>
            <person name="Larimer F."/>
            <person name="Land M."/>
            <person name="Stilwagen S."/>
            <person name="Larsson P."/>
            <person name="Bearden S."/>
            <person name="Chu M."/>
            <person name="Oyston P."/>
            <person name="Forsman M."/>
            <person name="Andersson S."/>
            <person name="Lindler L."/>
            <person name="Titball R."/>
            <person name="Garcia E."/>
        </authorList>
    </citation>
    <scope>NUCLEOTIDE SEQUENCE [LARGE SCALE GENOMIC DNA]</scope>
    <source>
        <strain>LVS</strain>
    </source>
</reference>
<keyword id="KW-0963">Cytoplasm</keyword>
<keyword id="KW-1185">Reference proteome</keyword>
<keyword id="KW-0690">Ribosome biogenesis</keyword>
<dbReference type="EMBL" id="AM233362">
    <property type="protein sequence ID" value="CAJ80250.1"/>
    <property type="molecule type" value="Genomic_DNA"/>
</dbReference>
<dbReference type="RefSeq" id="WP_003024580.1">
    <property type="nucleotide sequence ID" value="NZ_CP009694.1"/>
</dbReference>
<dbReference type="SMR" id="Q2A1G6"/>
<dbReference type="GeneID" id="75264607"/>
<dbReference type="KEGG" id="ftl:FTL_1811"/>
<dbReference type="Proteomes" id="UP000001944">
    <property type="component" value="Chromosome"/>
</dbReference>
<dbReference type="GO" id="GO:0005829">
    <property type="term" value="C:cytosol"/>
    <property type="evidence" value="ECO:0007669"/>
    <property type="project" value="TreeGrafter"/>
</dbReference>
<dbReference type="GO" id="GO:0000028">
    <property type="term" value="P:ribosomal small subunit assembly"/>
    <property type="evidence" value="ECO:0007669"/>
    <property type="project" value="TreeGrafter"/>
</dbReference>
<dbReference type="GO" id="GO:0006412">
    <property type="term" value="P:translation"/>
    <property type="evidence" value="ECO:0007669"/>
    <property type="project" value="TreeGrafter"/>
</dbReference>
<dbReference type="CDD" id="cd01734">
    <property type="entry name" value="YlxS_C"/>
    <property type="match status" value="1"/>
</dbReference>
<dbReference type="FunFam" id="3.30.300.70:FF:000001">
    <property type="entry name" value="Ribosome maturation factor RimP"/>
    <property type="match status" value="1"/>
</dbReference>
<dbReference type="Gene3D" id="2.30.30.180">
    <property type="entry name" value="Ribosome maturation factor RimP, C-terminal domain"/>
    <property type="match status" value="1"/>
</dbReference>
<dbReference type="Gene3D" id="3.30.300.70">
    <property type="entry name" value="RimP-like superfamily, N-terminal"/>
    <property type="match status" value="1"/>
</dbReference>
<dbReference type="HAMAP" id="MF_01077">
    <property type="entry name" value="RimP"/>
    <property type="match status" value="1"/>
</dbReference>
<dbReference type="InterPro" id="IPR003728">
    <property type="entry name" value="Ribosome_maturation_RimP"/>
</dbReference>
<dbReference type="InterPro" id="IPR028998">
    <property type="entry name" value="RimP_C"/>
</dbReference>
<dbReference type="InterPro" id="IPR036847">
    <property type="entry name" value="RimP_C_sf"/>
</dbReference>
<dbReference type="InterPro" id="IPR028989">
    <property type="entry name" value="RimP_N"/>
</dbReference>
<dbReference type="InterPro" id="IPR035956">
    <property type="entry name" value="RimP_N_sf"/>
</dbReference>
<dbReference type="NCBIfam" id="NF011226">
    <property type="entry name" value="PRK14633.1"/>
    <property type="match status" value="1"/>
</dbReference>
<dbReference type="PANTHER" id="PTHR33867">
    <property type="entry name" value="RIBOSOME MATURATION FACTOR RIMP"/>
    <property type="match status" value="1"/>
</dbReference>
<dbReference type="PANTHER" id="PTHR33867:SF1">
    <property type="entry name" value="RIBOSOME MATURATION FACTOR RIMP"/>
    <property type="match status" value="1"/>
</dbReference>
<dbReference type="Pfam" id="PF17384">
    <property type="entry name" value="DUF150_C"/>
    <property type="match status" value="1"/>
</dbReference>
<dbReference type="Pfam" id="PF02576">
    <property type="entry name" value="RimP_N"/>
    <property type="match status" value="1"/>
</dbReference>
<dbReference type="SUPFAM" id="SSF74942">
    <property type="entry name" value="YhbC-like, C-terminal domain"/>
    <property type="match status" value="1"/>
</dbReference>
<dbReference type="SUPFAM" id="SSF75420">
    <property type="entry name" value="YhbC-like, N-terminal domain"/>
    <property type="match status" value="1"/>
</dbReference>
<evidence type="ECO:0000255" key="1">
    <source>
        <dbReference type="HAMAP-Rule" id="MF_01077"/>
    </source>
</evidence>